<reference key="1">
    <citation type="submission" date="2005-03" db="EMBL/GenBank/DDBJ databases">
        <title>Annotation of the Saccharomyces cerevisiae RM11-1a genome.</title>
        <authorList>
            <consortium name="The Broad Institute Genome Sequencing Platform"/>
            <person name="Birren B.W."/>
            <person name="Lander E.S."/>
            <person name="Galagan J.E."/>
            <person name="Nusbaum C."/>
            <person name="Devon K."/>
            <person name="Cuomo C."/>
            <person name="Jaffe D.B."/>
            <person name="Butler J."/>
            <person name="Alvarez P."/>
            <person name="Gnerre S."/>
            <person name="Grabherr M."/>
            <person name="Kleber M."/>
            <person name="Mauceli E.W."/>
            <person name="Brockman W."/>
            <person name="MacCallum I.A."/>
            <person name="Rounsley S."/>
            <person name="Young S.K."/>
            <person name="LaButti K."/>
            <person name="Pushparaj V."/>
            <person name="DeCaprio D."/>
            <person name="Crawford M."/>
            <person name="Koehrsen M."/>
            <person name="Engels R."/>
            <person name="Montgomery P."/>
            <person name="Pearson M."/>
            <person name="Howarth C."/>
            <person name="Larson L."/>
            <person name="Luoma S."/>
            <person name="White J."/>
            <person name="O'Leary S."/>
            <person name="Kodira C.D."/>
            <person name="Zeng Q."/>
            <person name="Yandava C."/>
            <person name="Alvarado L."/>
            <person name="Pratt S."/>
            <person name="Kruglyak L."/>
        </authorList>
    </citation>
    <scope>NUCLEOTIDE SEQUENCE [LARGE SCALE GENOMIC DNA]</scope>
    <source>
        <strain>RM11-1a</strain>
    </source>
</reference>
<protein>
    <recommendedName>
        <fullName evidence="1">Arginine biosynthesis bifunctional protein ArgJ, mitochondrial</fullName>
    </recommendedName>
    <domain>
        <recommendedName>
            <fullName evidence="1">Glutamate N-acetyltransferase</fullName>
            <shortName evidence="1">GAT</shortName>
            <ecNumber evidence="1">2.3.1.35</ecNumber>
        </recommendedName>
        <alternativeName>
            <fullName evidence="1">Ornithine acetyltransferase</fullName>
            <shortName evidence="1">OATase</shortName>
        </alternativeName>
        <alternativeName>
            <fullName evidence="1">Ornithine transacetylase</fullName>
        </alternativeName>
    </domain>
    <domain>
        <recommendedName>
            <fullName evidence="1">Amino-acid acetyltransferase</fullName>
            <ecNumber evidence="1">2.3.1.1</ecNumber>
        </recommendedName>
        <alternativeName>
            <fullName evidence="1">N-acetylglutamate synthase</fullName>
            <shortName evidence="1">AGS</shortName>
        </alternativeName>
    </domain>
    <component>
        <recommendedName>
            <fullName evidence="1">Arginine biosynthesis bifunctional protein ArgJ alpha chain</fullName>
        </recommendedName>
    </component>
    <component>
        <recommendedName>
            <fullName evidence="1">Arginine biosynthesis bifunctional protein ArgJ beta chain</fullName>
        </recommendedName>
    </component>
</protein>
<sequence length="441" mass="47849">MRISSTLLQRSKQLIDKYALYVPKTGSFPKGFEVGYTASGVKKNGSLDLGVILNTNKSRPSTAAAVFTTNKFKAAPVLTSKKVLETARGKNINAIVVNSGCANSVTGDLGMKDAQVMIDLVNDKIGQKNSTLVMSTGVIGQRLQMDKISTGINKIFGEEKFGSDFNSWLNVAKSICTTDTFPKLVTSRFKLPSGTEYTLTGMAKGAGMICPNMATLLGFIVTDLPIESKALQKMLTFATTRSFNCISVDGDMSTNDTICMLANGAIDTKEINEDSKDFEQVKLQVTEFAQRLAQLVVRDGEGSTKFVTVNVKNALHFEDAKIIAESISNSMLVKTALYGQDANWGRILCAIGYAKLNDLKSLDVNKINVSFIATDNSEPRELKLVANGVPQLEIDETRASEILALNDLEVSVDLGTGDQAAQFWTCDLSHEYVTINGDYRS</sequence>
<proteinExistence type="inferred from homology"/>
<dbReference type="EC" id="2.3.1.35" evidence="1"/>
<dbReference type="EC" id="2.3.1.1" evidence="1"/>
<dbReference type="EMBL" id="CH408047">
    <property type="protein sequence ID" value="EDV11558.1"/>
    <property type="molecule type" value="Genomic_DNA"/>
</dbReference>
<dbReference type="SMR" id="B3LLV5"/>
<dbReference type="MEROPS" id="T05.001"/>
<dbReference type="HOGENOM" id="CLU_027172_1_0_1"/>
<dbReference type="OrthoDB" id="21522at4893"/>
<dbReference type="UniPathway" id="UPA00068">
    <property type="reaction ID" value="UER00106"/>
</dbReference>
<dbReference type="UniPathway" id="UPA00068">
    <property type="reaction ID" value="UER00111"/>
</dbReference>
<dbReference type="Proteomes" id="UP000008335">
    <property type="component" value="Unassembled WGS sequence"/>
</dbReference>
<dbReference type="GO" id="GO:0005759">
    <property type="term" value="C:mitochondrial matrix"/>
    <property type="evidence" value="ECO:0007669"/>
    <property type="project" value="UniProtKB-SubCell"/>
</dbReference>
<dbReference type="GO" id="GO:0004358">
    <property type="term" value="F:glutamate N-acetyltransferase activity"/>
    <property type="evidence" value="ECO:0007669"/>
    <property type="project" value="UniProtKB-UniRule"/>
</dbReference>
<dbReference type="GO" id="GO:0004042">
    <property type="term" value="F:L-glutamate N-acetyltransferase activity"/>
    <property type="evidence" value="ECO:0007669"/>
    <property type="project" value="UniProtKB-UniRule"/>
</dbReference>
<dbReference type="GO" id="GO:0006526">
    <property type="term" value="P:L-arginine biosynthetic process"/>
    <property type="evidence" value="ECO:0007669"/>
    <property type="project" value="UniProtKB-UniRule"/>
</dbReference>
<dbReference type="GO" id="GO:0006592">
    <property type="term" value="P:ornithine biosynthetic process"/>
    <property type="evidence" value="ECO:0007669"/>
    <property type="project" value="TreeGrafter"/>
</dbReference>
<dbReference type="CDD" id="cd02152">
    <property type="entry name" value="OAT"/>
    <property type="match status" value="1"/>
</dbReference>
<dbReference type="FunFam" id="3.10.20.340:FF:000002">
    <property type="entry name" value="Arginine biosynthesis bifunctional protein ArgJ, mitochondrial"/>
    <property type="match status" value="1"/>
</dbReference>
<dbReference type="FunFam" id="3.30.2330.10:FF:000001">
    <property type="entry name" value="Arginine biosynthesis bifunctional protein ArgJ, mitochondrial"/>
    <property type="match status" value="1"/>
</dbReference>
<dbReference type="FunFam" id="3.60.70.12:FF:000002">
    <property type="entry name" value="Arginine biosynthesis bifunctional protein ArgJ, mitochondrial"/>
    <property type="match status" value="1"/>
</dbReference>
<dbReference type="Gene3D" id="3.30.2330.10">
    <property type="entry name" value="arginine biosynthesis bifunctional protein suprefamily"/>
    <property type="match status" value="1"/>
</dbReference>
<dbReference type="Gene3D" id="3.10.20.340">
    <property type="entry name" value="ArgJ beta chain, C-terminal domain"/>
    <property type="match status" value="1"/>
</dbReference>
<dbReference type="Gene3D" id="3.60.70.12">
    <property type="entry name" value="L-amino peptidase D-ALA esterase/amidase"/>
    <property type="match status" value="1"/>
</dbReference>
<dbReference type="HAMAP" id="MF_01106">
    <property type="entry name" value="ArgJ"/>
    <property type="match status" value="1"/>
</dbReference>
<dbReference type="InterPro" id="IPR002813">
    <property type="entry name" value="Arg_biosynth_ArgJ"/>
</dbReference>
<dbReference type="InterPro" id="IPR016117">
    <property type="entry name" value="ArgJ-like_dom_sf"/>
</dbReference>
<dbReference type="InterPro" id="IPR042195">
    <property type="entry name" value="ArgJ_beta_C"/>
</dbReference>
<dbReference type="NCBIfam" id="TIGR00120">
    <property type="entry name" value="ArgJ"/>
    <property type="match status" value="1"/>
</dbReference>
<dbReference type="NCBIfam" id="NF003802">
    <property type="entry name" value="PRK05388.1"/>
    <property type="match status" value="1"/>
</dbReference>
<dbReference type="PANTHER" id="PTHR23100">
    <property type="entry name" value="ARGININE BIOSYNTHESIS BIFUNCTIONAL PROTEIN ARGJ"/>
    <property type="match status" value="1"/>
</dbReference>
<dbReference type="PANTHER" id="PTHR23100:SF0">
    <property type="entry name" value="ARGININE BIOSYNTHESIS BIFUNCTIONAL PROTEIN ARGJ, MITOCHONDRIAL"/>
    <property type="match status" value="1"/>
</dbReference>
<dbReference type="Pfam" id="PF01960">
    <property type="entry name" value="ArgJ"/>
    <property type="match status" value="1"/>
</dbReference>
<dbReference type="SUPFAM" id="SSF56266">
    <property type="entry name" value="DmpA/ArgJ-like"/>
    <property type="match status" value="1"/>
</dbReference>
<name>ARGJ_YEAS1</name>
<gene>
    <name evidence="1" type="primary">ARG7</name>
    <name type="ORF">SCRG_01954</name>
</gene>
<accession>B3LLV5</accession>
<comment type="function">
    <text evidence="1">Catalyzes two activities which are involved in the cyclic version of arginine biosynthesis: the synthesis of acetylglutamate from glutamate and acetyl-CoA, and of ornithine by transacetylation between acetylornithine and glutamate.</text>
</comment>
<comment type="catalytic activity">
    <reaction evidence="1">
        <text>N(2)-acetyl-L-ornithine + L-glutamate = N-acetyl-L-glutamate + L-ornithine</text>
        <dbReference type="Rhea" id="RHEA:15349"/>
        <dbReference type="ChEBI" id="CHEBI:29985"/>
        <dbReference type="ChEBI" id="CHEBI:44337"/>
        <dbReference type="ChEBI" id="CHEBI:46911"/>
        <dbReference type="ChEBI" id="CHEBI:57805"/>
        <dbReference type="EC" id="2.3.1.35"/>
    </reaction>
</comment>
<comment type="catalytic activity">
    <reaction evidence="1">
        <text>L-glutamate + acetyl-CoA = N-acetyl-L-glutamate + CoA + H(+)</text>
        <dbReference type="Rhea" id="RHEA:24292"/>
        <dbReference type="ChEBI" id="CHEBI:15378"/>
        <dbReference type="ChEBI" id="CHEBI:29985"/>
        <dbReference type="ChEBI" id="CHEBI:44337"/>
        <dbReference type="ChEBI" id="CHEBI:57287"/>
        <dbReference type="ChEBI" id="CHEBI:57288"/>
        <dbReference type="EC" id="2.3.1.1"/>
    </reaction>
</comment>
<comment type="pathway">
    <text evidence="1">Amino-acid biosynthesis; L-arginine biosynthesis; L-ornithine and N-acetyl-L-glutamate from L-glutamate and N(2)-acetyl-L-ornithine (cyclic): step 1/1.</text>
</comment>
<comment type="pathway">
    <text evidence="1">Amino-acid biosynthesis; L-arginine biosynthesis; N(2)-acetyl-L-ornithine from L-glutamate: step 1/4.</text>
</comment>
<comment type="subunit">
    <text evidence="1">Heterodimer of an alpha and a beta chain.</text>
</comment>
<comment type="subcellular location">
    <subcellularLocation>
        <location evidence="1">Mitochondrion matrix</location>
    </subcellularLocation>
</comment>
<comment type="PTM">
    <text evidence="1">The alpha and beta chains are autoproteolytically processed from a single precursor protein within the mitochondrion.</text>
</comment>
<comment type="similarity">
    <text evidence="1">Belongs to the ArgJ family.</text>
</comment>
<evidence type="ECO:0000255" key="1">
    <source>
        <dbReference type="HAMAP-Rule" id="MF_03124"/>
    </source>
</evidence>
<keyword id="KW-0012">Acyltransferase</keyword>
<keyword id="KW-0028">Amino-acid biosynthesis</keyword>
<keyword id="KW-0055">Arginine biosynthesis</keyword>
<keyword id="KW-0068">Autocatalytic cleavage</keyword>
<keyword id="KW-0496">Mitochondrion</keyword>
<keyword id="KW-0511">Multifunctional enzyme</keyword>
<keyword id="KW-0808">Transferase</keyword>
<keyword id="KW-0809">Transit peptide</keyword>
<organism>
    <name type="scientific">Saccharomyces cerevisiae (strain RM11-1a)</name>
    <name type="common">Baker's yeast</name>
    <dbReference type="NCBI Taxonomy" id="285006"/>
    <lineage>
        <taxon>Eukaryota</taxon>
        <taxon>Fungi</taxon>
        <taxon>Dikarya</taxon>
        <taxon>Ascomycota</taxon>
        <taxon>Saccharomycotina</taxon>
        <taxon>Saccharomycetes</taxon>
        <taxon>Saccharomycetales</taxon>
        <taxon>Saccharomycetaceae</taxon>
        <taxon>Saccharomyces</taxon>
    </lineage>
</organism>
<feature type="transit peptide" description="Mitochondrion" evidence="1">
    <location>
        <begin position="1"/>
        <end position="8"/>
    </location>
</feature>
<feature type="chain" id="PRO_0000398102" description="Arginine biosynthesis bifunctional protein ArgJ alpha chain" evidence="1">
    <location>
        <begin position="9"/>
        <end position="214"/>
    </location>
</feature>
<feature type="chain" id="PRO_0000398103" description="Arginine biosynthesis bifunctional protein ArgJ beta chain" evidence="1">
    <location>
        <begin position="215"/>
        <end position="441"/>
    </location>
</feature>
<feature type="active site" description="Nucleophile" evidence="1">
    <location>
        <position position="215"/>
    </location>
</feature>
<feature type="binding site" evidence="1">
    <location>
        <position position="177"/>
    </location>
    <ligand>
        <name>substrate</name>
    </ligand>
</feature>
<feature type="binding site" evidence="1">
    <location>
        <position position="204"/>
    </location>
    <ligand>
        <name>substrate</name>
    </ligand>
</feature>
<feature type="binding site" evidence="1">
    <location>
        <position position="215"/>
    </location>
    <ligand>
        <name>substrate</name>
    </ligand>
</feature>
<feature type="binding site" evidence="1">
    <location>
        <position position="301"/>
    </location>
    <ligand>
        <name>substrate</name>
    </ligand>
</feature>
<feature type="binding site" evidence="1">
    <location>
        <position position="436"/>
    </location>
    <ligand>
        <name>substrate</name>
    </ligand>
</feature>
<feature type="binding site" evidence="1">
    <location>
        <position position="441"/>
    </location>
    <ligand>
        <name>substrate</name>
    </ligand>
</feature>
<feature type="site" description="Involved in the stabilization of negative charge on the oxyanion by the formation of the oxyanion hole" evidence="1">
    <location>
        <position position="136"/>
    </location>
</feature>
<feature type="site" description="Involved in the stabilization of negative charge on the oxyanion by the formation of the oxyanion hole" evidence="1">
    <location>
        <position position="137"/>
    </location>
</feature>
<feature type="site" description="Cleavage; by autolysis" evidence="1">
    <location>
        <begin position="214"/>
        <end position="215"/>
    </location>
</feature>